<name>CYSC_ECO7I</name>
<dbReference type="EC" id="2.7.1.25" evidence="1"/>
<dbReference type="EMBL" id="CU928164">
    <property type="protein sequence ID" value="CAR19058.1"/>
    <property type="molecule type" value="Genomic_DNA"/>
</dbReference>
<dbReference type="RefSeq" id="WP_001173653.1">
    <property type="nucleotide sequence ID" value="NC_011750.1"/>
</dbReference>
<dbReference type="RefSeq" id="YP_002408870.1">
    <property type="nucleotide sequence ID" value="NC_011750.1"/>
</dbReference>
<dbReference type="SMR" id="B7NT94"/>
<dbReference type="STRING" id="585057.ECIAI39_2939"/>
<dbReference type="KEGG" id="ect:ECIAI39_2939"/>
<dbReference type="PATRIC" id="fig|585057.6.peg.3048"/>
<dbReference type="HOGENOM" id="CLU_046932_1_0_6"/>
<dbReference type="UniPathway" id="UPA00140">
    <property type="reaction ID" value="UER00205"/>
</dbReference>
<dbReference type="Proteomes" id="UP000000749">
    <property type="component" value="Chromosome"/>
</dbReference>
<dbReference type="GO" id="GO:0004020">
    <property type="term" value="F:adenylylsulfate kinase activity"/>
    <property type="evidence" value="ECO:0007669"/>
    <property type="project" value="UniProtKB-UniRule"/>
</dbReference>
<dbReference type="GO" id="GO:0005524">
    <property type="term" value="F:ATP binding"/>
    <property type="evidence" value="ECO:0007669"/>
    <property type="project" value="UniProtKB-UniRule"/>
</dbReference>
<dbReference type="GO" id="GO:0070814">
    <property type="term" value="P:hydrogen sulfide biosynthetic process"/>
    <property type="evidence" value="ECO:0007669"/>
    <property type="project" value="UniProtKB-UniRule"/>
</dbReference>
<dbReference type="GO" id="GO:0000103">
    <property type="term" value="P:sulfate assimilation"/>
    <property type="evidence" value="ECO:0007669"/>
    <property type="project" value="UniProtKB-UniRule"/>
</dbReference>
<dbReference type="CDD" id="cd02027">
    <property type="entry name" value="APSK"/>
    <property type="match status" value="1"/>
</dbReference>
<dbReference type="FunFam" id="3.40.50.300:FF:000212">
    <property type="entry name" value="Adenylyl-sulfate kinase"/>
    <property type="match status" value="1"/>
</dbReference>
<dbReference type="Gene3D" id="3.40.50.300">
    <property type="entry name" value="P-loop containing nucleotide triphosphate hydrolases"/>
    <property type="match status" value="1"/>
</dbReference>
<dbReference type="HAMAP" id="MF_00065">
    <property type="entry name" value="Adenylyl_sulf_kinase"/>
    <property type="match status" value="1"/>
</dbReference>
<dbReference type="InterPro" id="IPR002891">
    <property type="entry name" value="APS_kinase"/>
</dbReference>
<dbReference type="InterPro" id="IPR027417">
    <property type="entry name" value="P-loop_NTPase"/>
</dbReference>
<dbReference type="NCBIfam" id="TIGR00455">
    <property type="entry name" value="apsK"/>
    <property type="match status" value="1"/>
</dbReference>
<dbReference type="NCBIfam" id="NF003013">
    <property type="entry name" value="PRK03846.1"/>
    <property type="match status" value="1"/>
</dbReference>
<dbReference type="PANTHER" id="PTHR11055:SF63">
    <property type="entry name" value="ADENYLYL-SULFATE KINASE 1, CHLOROPLASTIC"/>
    <property type="match status" value="1"/>
</dbReference>
<dbReference type="PANTHER" id="PTHR11055">
    <property type="entry name" value="BIFUNCTIONAL 3'-PHOSPHOADENOSINE 5'-PHOSPHOSULFATE SYNTHASE"/>
    <property type="match status" value="1"/>
</dbReference>
<dbReference type="Pfam" id="PF01583">
    <property type="entry name" value="APS_kinase"/>
    <property type="match status" value="1"/>
</dbReference>
<dbReference type="SUPFAM" id="SSF52540">
    <property type="entry name" value="P-loop containing nucleoside triphosphate hydrolases"/>
    <property type="match status" value="1"/>
</dbReference>
<reference key="1">
    <citation type="journal article" date="2009" name="PLoS Genet.">
        <title>Organised genome dynamics in the Escherichia coli species results in highly diverse adaptive paths.</title>
        <authorList>
            <person name="Touchon M."/>
            <person name="Hoede C."/>
            <person name="Tenaillon O."/>
            <person name="Barbe V."/>
            <person name="Baeriswyl S."/>
            <person name="Bidet P."/>
            <person name="Bingen E."/>
            <person name="Bonacorsi S."/>
            <person name="Bouchier C."/>
            <person name="Bouvet O."/>
            <person name="Calteau A."/>
            <person name="Chiapello H."/>
            <person name="Clermont O."/>
            <person name="Cruveiller S."/>
            <person name="Danchin A."/>
            <person name="Diard M."/>
            <person name="Dossat C."/>
            <person name="Karoui M.E."/>
            <person name="Frapy E."/>
            <person name="Garry L."/>
            <person name="Ghigo J.M."/>
            <person name="Gilles A.M."/>
            <person name="Johnson J."/>
            <person name="Le Bouguenec C."/>
            <person name="Lescat M."/>
            <person name="Mangenot S."/>
            <person name="Martinez-Jehanne V."/>
            <person name="Matic I."/>
            <person name="Nassif X."/>
            <person name="Oztas S."/>
            <person name="Petit M.A."/>
            <person name="Pichon C."/>
            <person name="Rouy Z."/>
            <person name="Ruf C.S."/>
            <person name="Schneider D."/>
            <person name="Tourret J."/>
            <person name="Vacherie B."/>
            <person name="Vallenet D."/>
            <person name="Medigue C."/>
            <person name="Rocha E.P.C."/>
            <person name="Denamur E."/>
        </authorList>
    </citation>
    <scope>NUCLEOTIDE SEQUENCE [LARGE SCALE GENOMIC DNA]</scope>
    <source>
        <strain>IAI39 / ExPEC</strain>
    </source>
</reference>
<organism>
    <name type="scientific">Escherichia coli O7:K1 (strain IAI39 / ExPEC)</name>
    <dbReference type="NCBI Taxonomy" id="585057"/>
    <lineage>
        <taxon>Bacteria</taxon>
        <taxon>Pseudomonadati</taxon>
        <taxon>Pseudomonadota</taxon>
        <taxon>Gammaproteobacteria</taxon>
        <taxon>Enterobacterales</taxon>
        <taxon>Enterobacteriaceae</taxon>
        <taxon>Escherichia</taxon>
    </lineage>
</organism>
<sequence>MALHDENVVWHSHPVTPQQREQHHGHRGVVLWFTGLSGSGKSTVAGALEEALHKLGVSTYLLDGDNVRHGLCSDLGFSDADRKENIRRVGEVANLMVEAGLVVLTAFISPHRAERQMVRERVGEGRFIEVFVDTPLAICEARDPKGLYKKARAGELRNFTGIDSVYEAPESAEIHLNGEQLVTNLVQQLLDLLRQNDIIRS</sequence>
<comment type="function">
    <text evidence="1">Catalyzes the synthesis of activated sulfate.</text>
</comment>
<comment type="catalytic activity">
    <reaction evidence="1">
        <text>adenosine 5'-phosphosulfate + ATP = 3'-phosphoadenylyl sulfate + ADP + H(+)</text>
        <dbReference type="Rhea" id="RHEA:24152"/>
        <dbReference type="ChEBI" id="CHEBI:15378"/>
        <dbReference type="ChEBI" id="CHEBI:30616"/>
        <dbReference type="ChEBI" id="CHEBI:58243"/>
        <dbReference type="ChEBI" id="CHEBI:58339"/>
        <dbReference type="ChEBI" id="CHEBI:456216"/>
        <dbReference type="EC" id="2.7.1.25"/>
    </reaction>
</comment>
<comment type="pathway">
    <text evidence="1">Sulfur metabolism; hydrogen sulfide biosynthesis; sulfite from sulfate: step 2/3.</text>
</comment>
<comment type="similarity">
    <text evidence="1">Belongs to the APS kinase family.</text>
</comment>
<gene>
    <name evidence="1" type="primary">cysC</name>
    <name type="ordered locus">ECIAI39_2939</name>
</gene>
<protein>
    <recommendedName>
        <fullName evidence="1">Adenylyl-sulfate kinase</fullName>
        <ecNumber evidence="1">2.7.1.25</ecNumber>
    </recommendedName>
    <alternativeName>
        <fullName evidence="1">APS kinase</fullName>
    </alternativeName>
    <alternativeName>
        <fullName evidence="1">ATP adenosine-5'-phosphosulfate 3'-phosphotransferase</fullName>
    </alternativeName>
    <alternativeName>
        <fullName evidence="1">Adenosine-5'-phosphosulfate kinase</fullName>
    </alternativeName>
</protein>
<evidence type="ECO:0000255" key="1">
    <source>
        <dbReference type="HAMAP-Rule" id="MF_00065"/>
    </source>
</evidence>
<evidence type="ECO:0000256" key="2">
    <source>
        <dbReference type="SAM" id="MobiDB-lite"/>
    </source>
</evidence>
<keyword id="KW-0067">ATP-binding</keyword>
<keyword id="KW-0418">Kinase</keyword>
<keyword id="KW-0547">Nucleotide-binding</keyword>
<keyword id="KW-0597">Phosphoprotein</keyword>
<keyword id="KW-0808">Transferase</keyword>
<feature type="chain" id="PRO_1000116967" description="Adenylyl-sulfate kinase">
    <location>
        <begin position="1"/>
        <end position="201"/>
    </location>
</feature>
<feature type="region of interest" description="Disordered" evidence="2">
    <location>
        <begin position="1"/>
        <end position="23"/>
    </location>
</feature>
<feature type="active site" description="Phosphoserine intermediate" evidence="1">
    <location>
        <position position="109"/>
    </location>
</feature>
<feature type="binding site" evidence="1">
    <location>
        <begin position="35"/>
        <end position="42"/>
    </location>
    <ligand>
        <name>ATP</name>
        <dbReference type="ChEBI" id="CHEBI:30616"/>
    </ligand>
</feature>
<proteinExistence type="inferred from homology"/>
<accession>B7NT94</accession>